<organism>
    <name type="scientific">Haemophilus influenzae (strain ATCC 51907 / DSM 11121 / KW20 / Rd)</name>
    <dbReference type="NCBI Taxonomy" id="71421"/>
    <lineage>
        <taxon>Bacteria</taxon>
        <taxon>Pseudomonadati</taxon>
        <taxon>Pseudomonadota</taxon>
        <taxon>Gammaproteobacteria</taxon>
        <taxon>Pasteurellales</taxon>
        <taxon>Pasteurellaceae</taxon>
        <taxon>Haemophilus</taxon>
    </lineage>
</organism>
<reference key="1">
    <citation type="journal article" date="1995" name="Science">
        <title>Whole-genome random sequencing and assembly of Haemophilus influenzae Rd.</title>
        <authorList>
            <person name="Fleischmann R.D."/>
            <person name="Adams M.D."/>
            <person name="White O."/>
            <person name="Clayton R.A."/>
            <person name="Kirkness E.F."/>
            <person name="Kerlavage A.R."/>
            <person name="Bult C.J."/>
            <person name="Tomb J.-F."/>
            <person name="Dougherty B.A."/>
            <person name="Merrick J.M."/>
            <person name="McKenney K."/>
            <person name="Sutton G.G."/>
            <person name="FitzHugh W."/>
            <person name="Fields C.A."/>
            <person name="Gocayne J.D."/>
            <person name="Scott J.D."/>
            <person name="Shirley R."/>
            <person name="Liu L.-I."/>
            <person name="Glodek A."/>
            <person name="Kelley J.M."/>
            <person name="Weidman J.F."/>
            <person name="Phillips C.A."/>
            <person name="Spriggs T."/>
            <person name="Hedblom E."/>
            <person name="Cotton M.D."/>
            <person name="Utterback T.R."/>
            <person name="Hanna M.C."/>
            <person name="Nguyen D.T."/>
            <person name="Saudek D.M."/>
            <person name="Brandon R.C."/>
            <person name="Fine L.D."/>
            <person name="Fritchman J.L."/>
            <person name="Fuhrmann J.L."/>
            <person name="Geoghagen N.S.M."/>
            <person name="Gnehm C.L."/>
            <person name="McDonald L.A."/>
            <person name="Small K.V."/>
            <person name="Fraser C.M."/>
            <person name="Smith H.O."/>
            <person name="Venter J.C."/>
        </authorList>
    </citation>
    <scope>NUCLEOTIDE SEQUENCE [LARGE SCALE GENOMIC DNA]</scope>
    <source>
        <strain>ATCC 51907 / DSM 11121 / KW20 / Rd</strain>
    </source>
</reference>
<reference key="2">
    <citation type="submission" date="1998-05" db="EMBL/GenBank/DDBJ databases">
        <authorList>
            <person name="White O."/>
            <person name="Clayton R.A."/>
            <person name="Kerlavage A.R."/>
            <person name="Fleischmann R.D."/>
            <person name="Peterson J."/>
            <person name="Hickey E."/>
            <person name="Dodson R."/>
            <person name="Gwinn M."/>
        </authorList>
    </citation>
    <scope>SEQUENCE REVISION</scope>
</reference>
<proteinExistence type="inferred from homology"/>
<comment type="similarity">
    <text evidence="1">Belongs to the SufE family.</text>
</comment>
<name>Y1293_HAEIN</name>
<feature type="chain" id="PRO_0000202138" description="Uncharacterized SufE-like protein HI_1293">
    <location>
        <begin position="1"/>
        <end position="126"/>
    </location>
</feature>
<accession>P44156</accession>
<accession>P44155</accession>
<keyword id="KW-1185">Reference proteome</keyword>
<protein>
    <recommendedName>
        <fullName>Uncharacterized SufE-like protein HI_1293</fullName>
    </recommendedName>
</protein>
<sequence>MIEQLKQAKNWEDRYRLIIQAGKNLPRPSDNELAQMQPITGCEAQMWFQIMPKNDRTFQFSGFSEARIMNGLLWILFNQINGKTADELNTFDITVFFSELGISQRLSEMRLNGLNQIGQQLKNLCI</sequence>
<evidence type="ECO:0000305" key="1"/>
<gene>
    <name type="ordered locus">HI_1293</name>
</gene>
<dbReference type="EMBL" id="L42023">
    <property type="protein sequence ID" value="AAC22947.1"/>
    <property type="molecule type" value="Genomic_DNA"/>
</dbReference>
<dbReference type="PIR" id="T09422">
    <property type="entry name" value="B64025"/>
</dbReference>
<dbReference type="RefSeq" id="NP_439445.1">
    <property type="nucleotide sequence ID" value="NC_000907.1"/>
</dbReference>
<dbReference type="SMR" id="P44156"/>
<dbReference type="STRING" id="71421.HI_1293"/>
<dbReference type="EnsemblBacteria" id="AAC22947">
    <property type="protein sequence ID" value="AAC22947"/>
    <property type="gene ID" value="HI_1293"/>
</dbReference>
<dbReference type="KEGG" id="hin:HI_1293"/>
<dbReference type="PATRIC" id="fig|71421.8.peg.1345"/>
<dbReference type="eggNOG" id="COG2166">
    <property type="taxonomic scope" value="Bacteria"/>
</dbReference>
<dbReference type="HOGENOM" id="CLU_124502_1_0_6"/>
<dbReference type="OrthoDB" id="9799320at2"/>
<dbReference type="PhylomeDB" id="P44156"/>
<dbReference type="BioCyc" id="HINF71421:G1GJ1-1319-MONOMER"/>
<dbReference type="Proteomes" id="UP000000579">
    <property type="component" value="Chromosome"/>
</dbReference>
<dbReference type="Gene3D" id="3.90.1010.10">
    <property type="match status" value="1"/>
</dbReference>
<dbReference type="InterPro" id="IPR003808">
    <property type="entry name" value="Fe-S_metab-assoc_dom"/>
</dbReference>
<dbReference type="PANTHER" id="PTHR43597:SF5">
    <property type="entry name" value="SUFE-LIKE PROTEIN 2, CHLOROPLASTIC"/>
    <property type="match status" value="1"/>
</dbReference>
<dbReference type="PANTHER" id="PTHR43597">
    <property type="entry name" value="SULFUR ACCEPTOR PROTEIN CSDE"/>
    <property type="match status" value="1"/>
</dbReference>
<dbReference type="Pfam" id="PF02657">
    <property type="entry name" value="SufE"/>
    <property type="match status" value="1"/>
</dbReference>
<dbReference type="SUPFAM" id="SSF82649">
    <property type="entry name" value="SufE/NifU"/>
    <property type="match status" value="1"/>
</dbReference>